<sequence>MKKLGTDLLKRGFAKMVKHGVVMDVTNVEQAQIAEDAGAAAVMALERVPADIRVQGGVARMSDPEMILEIKDAVSIPVMAKARIGHYVEAQVLESIGVDMVDESEVLTPADEVNHIDKRAFTAPFVCGARNLGEALRRIDEGAAMIRTKGEAGTGNVVEAVKHMRAVNEGIARVVGYKEMGLEAELIQMARNELKVPMELISEVAELKRLPVVNFAAGGIATPADAALMMQMGCDGVFVGSGIFKSGNPEVRAKAIVEATYNFDKADVIGEVSKNLGEAMVGINIDEIPEEKLLAKRGI</sequence>
<evidence type="ECO:0000255" key="1">
    <source>
        <dbReference type="HAMAP-Rule" id="MF_01824"/>
    </source>
</evidence>
<proteinExistence type="inferred from homology"/>
<feature type="chain" id="PRO_1000070384" description="Pyridoxal 5'-phosphate synthase subunit PdxS">
    <location>
        <begin position="1"/>
        <end position="299"/>
    </location>
</feature>
<feature type="active site" description="Schiff-base intermediate with D-ribose 5-phosphate" evidence="1">
    <location>
        <position position="81"/>
    </location>
</feature>
<feature type="binding site" evidence="1">
    <location>
        <position position="24"/>
    </location>
    <ligand>
        <name>D-ribose 5-phosphate</name>
        <dbReference type="ChEBI" id="CHEBI:78346"/>
    </ligand>
</feature>
<feature type="binding site" evidence="1">
    <location>
        <position position="153"/>
    </location>
    <ligand>
        <name>D-ribose 5-phosphate</name>
        <dbReference type="ChEBI" id="CHEBI:78346"/>
    </ligand>
</feature>
<feature type="binding site" evidence="1">
    <location>
        <position position="165"/>
    </location>
    <ligand>
        <name>D-glyceraldehyde 3-phosphate</name>
        <dbReference type="ChEBI" id="CHEBI:59776"/>
    </ligand>
</feature>
<feature type="binding site" evidence="1">
    <location>
        <position position="219"/>
    </location>
    <ligand>
        <name>D-ribose 5-phosphate</name>
        <dbReference type="ChEBI" id="CHEBI:78346"/>
    </ligand>
</feature>
<feature type="binding site" evidence="1">
    <location>
        <begin position="240"/>
        <end position="241"/>
    </location>
    <ligand>
        <name>D-ribose 5-phosphate</name>
        <dbReference type="ChEBI" id="CHEBI:78346"/>
    </ligand>
</feature>
<accession>A4G086</accession>
<reference key="1">
    <citation type="submission" date="2007-03" db="EMBL/GenBank/DDBJ databases">
        <title>Complete sequence of chromosome of Methanococcus maripaludis C5.</title>
        <authorList>
            <consortium name="US DOE Joint Genome Institute"/>
            <person name="Copeland A."/>
            <person name="Lucas S."/>
            <person name="Lapidus A."/>
            <person name="Barry K."/>
            <person name="Glavina del Rio T."/>
            <person name="Dalin E."/>
            <person name="Tice H."/>
            <person name="Pitluck S."/>
            <person name="Chertkov O."/>
            <person name="Brettin T."/>
            <person name="Bruce D."/>
            <person name="Han C."/>
            <person name="Detter J.C."/>
            <person name="Schmutz J."/>
            <person name="Larimer F."/>
            <person name="Land M."/>
            <person name="Hauser L."/>
            <person name="Kyrpides N."/>
            <person name="Mikhailova N."/>
            <person name="Sieprawska-Lupa M."/>
            <person name="Whitman W.B."/>
            <person name="Richardson P."/>
        </authorList>
    </citation>
    <scope>NUCLEOTIDE SEQUENCE [LARGE SCALE GENOMIC DNA]</scope>
    <source>
        <strain>C5 / ATCC BAA-1333</strain>
    </source>
</reference>
<organism>
    <name type="scientific">Methanococcus maripaludis (strain C5 / ATCC BAA-1333)</name>
    <dbReference type="NCBI Taxonomy" id="402880"/>
    <lineage>
        <taxon>Archaea</taxon>
        <taxon>Methanobacteriati</taxon>
        <taxon>Methanobacteriota</taxon>
        <taxon>Methanomada group</taxon>
        <taxon>Methanococci</taxon>
        <taxon>Methanococcales</taxon>
        <taxon>Methanococcaceae</taxon>
        <taxon>Methanococcus</taxon>
    </lineage>
</organism>
<protein>
    <recommendedName>
        <fullName evidence="1">Pyridoxal 5'-phosphate synthase subunit PdxS</fullName>
        <shortName evidence="1">PLP synthase subunit PdxS</shortName>
        <ecNumber evidence="1">4.3.3.6</ecNumber>
    </recommendedName>
    <alternativeName>
        <fullName evidence="1">Pdx1</fullName>
    </alternativeName>
</protein>
<gene>
    <name evidence="1" type="primary">pdxS</name>
    <name type="ordered locus">MmarC5_1573</name>
</gene>
<name>PDXS_METM5</name>
<keyword id="KW-0456">Lyase</keyword>
<keyword id="KW-0663">Pyridoxal phosphate</keyword>
<keyword id="KW-0704">Schiff base</keyword>
<dbReference type="EC" id="4.3.3.6" evidence="1"/>
<dbReference type="EMBL" id="CP000609">
    <property type="protein sequence ID" value="ABO35870.1"/>
    <property type="molecule type" value="Genomic_DNA"/>
</dbReference>
<dbReference type="RefSeq" id="WP_011869317.1">
    <property type="nucleotide sequence ID" value="NC_009135.1"/>
</dbReference>
<dbReference type="SMR" id="A4G086"/>
<dbReference type="STRING" id="402880.MmarC5_1573"/>
<dbReference type="GeneID" id="4928312"/>
<dbReference type="KEGG" id="mmq:MmarC5_1573"/>
<dbReference type="eggNOG" id="arCOG04075">
    <property type="taxonomic scope" value="Archaea"/>
</dbReference>
<dbReference type="HOGENOM" id="CLU_055352_1_0_2"/>
<dbReference type="OrthoDB" id="6840at2157"/>
<dbReference type="UniPathway" id="UPA00245"/>
<dbReference type="Proteomes" id="UP000000253">
    <property type="component" value="Chromosome"/>
</dbReference>
<dbReference type="GO" id="GO:0036381">
    <property type="term" value="F:pyridoxal 5'-phosphate synthase (glutamine hydrolysing) activity"/>
    <property type="evidence" value="ECO:0007669"/>
    <property type="project" value="UniProtKB-UniRule"/>
</dbReference>
<dbReference type="GO" id="GO:0006520">
    <property type="term" value="P:amino acid metabolic process"/>
    <property type="evidence" value="ECO:0007669"/>
    <property type="project" value="TreeGrafter"/>
</dbReference>
<dbReference type="GO" id="GO:0042823">
    <property type="term" value="P:pyridoxal phosphate biosynthetic process"/>
    <property type="evidence" value="ECO:0007669"/>
    <property type="project" value="UniProtKB-UniRule"/>
</dbReference>
<dbReference type="GO" id="GO:0008615">
    <property type="term" value="P:pyridoxine biosynthetic process"/>
    <property type="evidence" value="ECO:0007669"/>
    <property type="project" value="TreeGrafter"/>
</dbReference>
<dbReference type="CDD" id="cd04727">
    <property type="entry name" value="pdxS"/>
    <property type="match status" value="1"/>
</dbReference>
<dbReference type="FunFam" id="3.20.20.70:FF:000001">
    <property type="entry name" value="Pyridoxine biosynthesis protein PDX1"/>
    <property type="match status" value="1"/>
</dbReference>
<dbReference type="Gene3D" id="3.20.20.70">
    <property type="entry name" value="Aldolase class I"/>
    <property type="match status" value="1"/>
</dbReference>
<dbReference type="HAMAP" id="MF_01824">
    <property type="entry name" value="PdxS"/>
    <property type="match status" value="1"/>
</dbReference>
<dbReference type="InterPro" id="IPR013785">
    <property type="entry name" value="Aldolase_TIM"/>
</dbReference>
<dbReference type="InterPro" id="IPR001852">
    <property type="entry name" value="PdxS/SNZ"/>
</dbReference>
<dbReference type="InterPro" id="IPR033755">
    <property type="entry name" value="PdxS/SNZ_N"/>
</dbReference>
<dbReference type="InterPro" id="IPR011060">
    <property type="entry name" value="RibuloseP-bd_barrel"/>
</dbReference>
<dbReference type="NCBIfam" id="NF003215">
    <property type="entry name" value="PRK04180.1"/>
    <property type="match status" value="1"/>
</dbReference>
<dbReference type="NCBIfam" id="TIGR00343">
    <property type="entry name" value="pyridoxal 5'-phosphate synthase lyase subunit PdxS"/>
    <property type="match status" value="1"/>
</dbReference>
<dbReference type="PANTHER" id="PTHR31829">
    <property type="entry name" value="PYRIDOXAL 5'-PHOSPHATE SYNTHASE SUBUNIT SNZ1-RELATED"/>
    <property type="match status" value="1"/>
</dbReference>
<dbReference type="PANTHER" id="PTHR31829:SF0">
    <property type="entry name" value="PYRIDOXAL 5'-PHOSPHATE SYNTHASE SUBUNIT SNZ1-RELATED"/>
    <property type="match status" value="1"/>
</dbReference>
<dbReference type="Pfam" id="PF01680">
    <property type="entry name" value="SOR_SNZ"/>
    <property type="match status" value="1"/>
</dbReference>
<dbReference type="PIRSF" id="PIRSF029271">
    <property type="entry name" value="Pdx1"/>
    <property type="match status" value="1"/>
</dbReference>
<dbReference type="SUPFAM" id="SSF51366">
    <property type="entry name" value="Ribulose-phoshate binding barrel"/>
    <property type="match status" value="1"/>
</dbReference>
<dbReference type="PROSITE" id="PS01235">
    <property type="entry name" value="PDXS_SNZ_1"/>
    <property type="match status" value="1"/>
</dbReference>
<dbReference type="PROSITE" id="PS51129">
    <property type="entry name" value="PDXS_SNZ_2"/>
    <property type="match status" value="1"/>
</dbReference>
<comment type="function">
    <text evidence="1">Catalyzes the formation of pyridoxal 5'-phosphate from ribose 5-phosphate (RBP), glyceraldehyde 3-phosphate (G3P) and ammonia. The ammonia is provided by the PdxT subunit. Can also use ribulose 5-phosphate and dihydroxyacetone phosphate as substrates, resulting from enzyme-catalyzed isomerization of RBP and G3P, respectively.</text>
</comment>
<comment type="catalytic activity">
    <reaction evidence="1">
        <text>aldehydo-D-ribose 5-phosphate + D-glyceraldehyde 3-phosphate + L-glutamine = pyridoxal 5'-phosphate + L-glutamate + phosphate + 3 H2O + H(+)</text>
        <dbReference type="Rhea" id="RHEA:31507"/>
        <dbReference type="ChEBI" id="CHEBI:15377"/>
        <dbReference type="ChEBI" id="CHEBI:15378"/>
        <dbReference type="ChEBI" id="CHEBI:29985"/>
        <dbReference type="ChEBI" id="CHEBI:43474"/>
        <dbReference type="ChEBI" id="CHEBI:58273"/>
        <dbReference type="ChEBI" id="CHEBI:58359"/>
        <dbReference type="ChEBI" id="CHEBI:59776"/>
        <dbReference type="ChEBI" id="CHEBI:597326"/>
        <dbReference type="EC" id="4.3.3.6"/>
    </reaction>
</comment>
<comment type="pathway">
    <text evidence="1">Cofactor biosynthesis; pyridoxal 5'-phosphate biosynthesis.</text>
</comment>
<comment type="subunit">
    <text evidence="1">In the presence of PdxT, forms a dodecamer of heterodimers.</text>
</comment>
<comment type="similarity">
    <text evidence="1">Belongs to the PdxS/SNZ family.</text>
</comment>